<comment type="function">
    <text evidence="2">Antimicrobial host-defense peptide.</text>
</comment>
<comment type="subcellular location">
    <subcellularLocation>
        <location evidence="4">Secreted</location>
    </subcellularLocation>
</comment>
<comment type="similarity">
    <text evidence="4">Belongs to the beta-defensin family.</text>
</comment>
<feature type="signal peptide" evidence="3">
    <location>
        <begin position="1"/>
        <end position="22"/>
    </location>
</feature>
<feature type="chain" id="PRO_0000045370" description="Beta-defensin 130">
    <location>
        <begin position="23"/>
        <end position="79"/>
    </location>
</feature>
<feature type="disulfide bond" evidence="1">
    <location>
        <begin position="38"/>
        <end position="53"/>
    </location>
</feature>
<feature type="disulfide bond" evidence="1">
    <location>
        <begin position="43"/>
        <end position="60"/>
    </location>
</feature>
<accession>Q30KJ9</accession>
<sequence length="79" mass="8736">MKLHSLISVLLLFVTLIPKGKTGVIPGQKQCIALKGVCRDKLCSTLDDTIGICNEGKKCCRRWWILEPYPTPVPKGKSP</sequence>
<reference key="1">
    <citation type="journal article" date="2005" name="Physiol. Genomics">
        <title>Cross-species analysis of the mammalian beta-defensin gene family: presence of syntenic gene clusters and preferential expression in the male reproductive tract.</title>
        <authorList>
            <person name="Patil A.A."/>
            <person name="Cai Y."/>
            <person name="Sang Y."/>
            <person name="Blecha F."/>
            <person name="Zhang G."/>
        </authorList>
    </citation>
    <scope>NUCLEOTIDE SEQUENCE [MRNA]</scope>
</reference>
<keyword id="KW-0044">Antibiotic</keyword>
<keyword id="KW-0929">Antimicrobial</keyword>
<keyword id="KW-0211">Defensin</keyword>
<keyword id="KW-1015">Disulfide bond</keyword>
<keyword id="KW-1185">Reference proteome</keyword>
<keyword id="KW-0964">Secreted</keyword>
<keyword id="KW-0732">Signal</keyword>
<gene>
    <name evidence="2" type="primary">DEFB130</name>
</gene>
<protein>
    <recommendedName>
        <fullName evidence="2">Beta-defensin 130</fullName>
    </recommendedName>
    <alternativeName>
        <fullName evidence="2">Defensin, beta 130</fullName>
    </alternativeName>
</protein>
<name>DB130_PANTR</name>
<proteinExistence type="inferred from homology"/>
<evidence type="ECO:0000250" key="1"/>
<evidence type="ECO:0000250" key="2">
    <source>
        <dbReference type="UniProtKB" id="P0DP74"/>
    </source>
</evidence>
<evidence type="ECO:0000255" key="3"/>
<evidence type="ECO:0000305" key="4"/>
<dbReference type="EMBL" id="DQ012081">
    <property type="protein sequence ID" value="AAY59811.1"/>
    <property type="molecule type" value="mRNA"/>
</dbReference>
<dbReference type="RefSeq" id="NP_001123256.1">
    <property type="nucleotide sequence ID" value="NM_001129784.1"/>
</dbReference>
<dbReference type="SMR" id="Q30KJ9"/>
<dbReference type="FunCoup" id="Q30KJ9">
    <property type="interactions" value="213"/>
</dbReference>
<dbReference type="STRING" id="9598.ENSPTRP00000054328"/>
<dbReference type="PaxDb" id="9598-ENSPTRP00000054328"/>
<dbReference type="Ensembl" id="ENSPTRT00000061786.2">
    <property type="protein sequence ID" value="ENSPTRP00000054328.1"/>
    <property type="gene ID" value="ENSPTRG00000032474.2"/>
</dbReference>
<dbReference type="GeneID" id="748166"/>
<dbReference type="KEGG" id="ptr:748166"/>
<dbReference type="CTD" id="748166"/>
<dbReference type="eggNOG" id="ENOG502TEXC">
    <property type="taxonomic scope" value="Eukaryota"/>
</dbReference>
<dbReference type="GeneTree" id="ENSGT00940000160995"/>
<dbReference type="HOGENOM" id="CLU_191088_0_0_1"/>
<dbReference type="InParanoid" id="Q30KJ9"/>
<dbReference type="OMA" id="TIGVCND"/>
<dbReference type="Proteomes" id="UP000002277">
    <property type="component" value="Chromosome 11"/>
</dbReference>
<dbReference type="Bgee" id="ENSPTRG00000032474">
    <property type="expression patterns" value="Expressed in bone marrow and 16 other cell types or tissues"/>
</dbReference>
<dbReference type="GO" id="GO:0005615">
    <property type="term" value="C:extracellular space"/>
    <property type="evidence" value="ECO:0000318"/>
    <property type="project" value="GO_Central"/>
</dbReference>
<dbReference type="GO" id="GO:0031731">
    <property type="term" value="F:CCR6 chemokine receptor binding"/>
    <property type="evidence" value="ECO:0000318"/>
    <property type="project" value="GO_Central"/>
</dbReference>
<dbReference type="GO" id="GO:0042056">
    <property type="term" value="F:chemoattractant activity"/>
    <property type="evidence" value="ECO:0000318"/>
    <property type="project" value="GO_Central"/>
</dbReference>
<dbReference type="GO" id="GO:0060326">
    <property type="term" value="P:cell chemotaxis"/>
    <property type="evidence" value="ECO:0000318"/>
    <property type="project" value="GO_Central"/>
</dbReference>
<dbReference type="GO" id="GO:0042742">
    <property type="term" value="P:defense response to bacterium"/>
    <property type="evidence" value="ECO:0000318"/>
    <property type="project" value="GO_Central"/>
</dbReference>
<dbReference type="InterPro" id="IPR001855">
    <property type="entry name" value="Defensin_beta-like"/>
</dbReference>
<dbReference type="PANTHER" id="PTHR20515">
    <property type="entry name" value="BETA-DEFENSIN"/>
    <property type="match status" value="1"/>
</dbReference>
<dbReference type="PANTHER" id="PTHR20515:SF1">
    <property type="entry name" value="BETA-DEFENSIN 130A-RELATED"/>
    <property type="match status" value="1"/>
</dbReference>
<dbReference type="Pfam" id="PF00711">
    <property type="entry name" value="Defensin_beta"/>
    <property type="match status" value="1"/>
</dbReference>
<dbReference type="SUPFAM" id="SSF57392">
    <property type="entry name" value="Defensin-like"/>
    <property type="match status" value="1"/>
</dbReference>
<organism>
    <name type="scientific">Pan troglodytes</name>
    <name type="common">Chimpanzee</name>
    <dbReference type="NCBI Taxonomy" id="9598"/>
    <lineage>
        <taxon>Eukaryota</taxon>
        <taxon>Metazoa</taxon>
        <taxon>Chordata</taxon>
        <taxon>Craniata</taxon>
        <taxon>Vertebrata</taxon>
        <taxon>Euteleostomi</taxon>
        <taxon>Mammalia</taxon>
        <taxon>Eutheria</taxon>
        <taxon>Euarchontoglires</taxon>
        <taxon>Primates</taxon>
        <taxon>Haplorrhini</taxon>
        <taxon>Catarrhini</taxon>
        <taxon>Hominidae</taxon>
        <taxon>Pan</taxon>
    </lineage>
</organism>